<accession>Q8K935</accession>
<gene>
    <name evidence="1" type="primary">prfC</name>
    <name type="ordered locus">BUsg_523</name>
</gene>
<proteinExistence type="inferred from homology"/>
<evidence type="ECO:0000255" key="1">
    <source>
        <dbReference type="HAMAP-Rule" id="MF_00072"/>
    </source>
</evidence>
<protein>
    <recommendedName>
        <fullName evidence="1">Peptide chain release factor 3</fullName>
        <shortName evidence="1">RF-3</shortName>
    </recommendedName>
</protein>
<feature type="chain" id="PRO_0000210934" description="Peptide chain release factor 3">
    <location>
        <begin position="1"/>
        <end position="529"/>
    </location>
</feature>
<feature type="domain" description="tr-type G">
    <location>
        <begin position="11"/>
        <end position="280"/>
    </location>
</feature>
<feature type="binding site" evidence="1">
    <location>
        <begin position="20"/>
        <end position="27"/>
    </location>
    <ligand>
        <name>GTP</name>
        <dbReference type="ChEBI" id="CHEBI:37565"/>
    </ligand>
</feature>
<feature type="binding site" evidence="1">
    <location>
        <begin position="88"/>
        <end position="92"/>
    </location>
    <ligand>
        <name>GTP</name>
        <dbReference type="ChEBI" id="CHEBI:37565"/>
    </ligand>
</feature>
<feature type="binding site" evidence="1">
    <location>
        <begin position="142"/>
        <end position="145"/>
    </location>
    <ligand>
        <name>GTP</name>
        <dbReference type="ChEBI" id="CHEBI:37565"/>
    </ligand>
</feature>
<sequence length="529" mass="60738">MFNINHQLELSKRRTFAIISHPDAGKTTVTEKMLLLGKVIRTSGTIKARGNGKYAKSDWMNIEKKRGISITTSVMQFTYKNTLMNLLDTPGHEDFSEDTYRILTAVDCCLLIIDAAKGIEDRTKKLINVSRLHNTPVITFINKLDRDSREAIEILDEIEKELSLDCIPITWPISCGKNFKGICHIHDKIVNLYQKNIVKKINFNSFSSFLNEHSLKEYLGADLYTQLHEELKLAAYVYPKFSKKKFLKGDITPVLFGSALNNFGIDHILESLIKWAPSPIYRVTKTRKVEPEEKKFTGFVFKIQANMDLKHRDRIAFMRIVSGKYKKGIKLRHVRMKKDIIVSDAFSFLAGDRFSIEHAYPGDVIGIHNHGTIKIGDTFTEGEEIKFVGIPSFAPEVFRRIFLKNPLQQKKLKKGLSQLSEEGAIQVFRPMINNSLILGAIGILQFDVVIERLKIEYKIDAIYERVNISLARWIRSKNKKIISDFINKNKSYLALDISNQLIYLAPNKANLAVIKNIYNNIFFEKTREQ</sequence>
<comment type="function">
    <text evidence="1">Increases the formation of ribosomal termination complexes and stimulates activities of RF-1 and RF-2. It binds guanine nucleotides and has strong preference for UGA stop codons. It may interact directly with the ribosome. The stimulation of RF-1 and RF-2 is significantly reduced by GTP and GDP, but not by GMP.</text>
</comment>
<comment type="subcellular location">
    <subcellularLocation>
        <location evidence="1">Cytoplasm</location>
    </subcellularLocation>
</comment>
<comment type="similarity">
    <text evidence="1">Belongs to the TRAFAC class translation factor GTPase superfamily. Classic translation factor GTPase family. PrfC subfamily.</text>
</comment>
<dbReference type="EMBL" id="AE013218">
    <property type="protein sequence ID" value="AAM68066.1"/>
    <property type="molecule type" value="Genomic_DNA"/>
</dbReference>
<dbReference type="RefSeq" id="WP_011054032.1">
    <property type="nucleotide sequence ID" value="NC_004061.1"/>
</dbReference>
<dbReference type="SMR" id="Q8K935"/>
<dbReference type="STRING" id="198804.BUsg_523"/>
<dbReference type="GeneID" id="93003999"/>
<dbReference type="KEGG" id="bas:BUsg_523"/>
<dbReference type="eggNOG" id="COG4108">
    <property type="taxonomic scope" value="Bacteria"/>
</dbReference>
<dbReference type="HOGENOM" id="CLU_002794_2_1_6"/>
<dbReference type="Proteomes" id="UP000000416">
    <property type="component" value="Chromosome"/>
</dbReference>
<dbReference type="GO" id="GO:0005829">
    <property type="term" value="C:cytosol"/>
    <property type="evidence" value="ECO:0007669"/>
    <property type="project" value="TreeGrafter"/>
</dbReference>
<dbReference type="GO" id="GO:0005525">
    <property type="term" value="F:GTP binding"/>
    <property type="evidence" value="ECO:0007669"/>
    <property type="project" value="UniProtKB-UniRule"/>
</dbReference>
<dbReference type="GO" id="GO:0003924">
    <property type="term" value="F:GTPase activity"/>
    <property type="evidence" value="ECO:0007669"/>
    <property type="project" value="InterPro"/>
</dbReference>
<dbReference type="GO" id="GO:0097216">
    <property type="term" value="F:guanosine tetraphosphate binding"/>
    <property type="evidence" value="ECO:0007669"/>
    <property type="project" value="UniProtKB-ARBA"/>
</dbReference>
<dbReference type="GO" id="GO:0016150">
    <property type="term" value="F:translation release factor activity, codon nonspecific"/>
    <property type="evidence" value="ECO:0007669"/>
    <property type="project" value="TreeGrafter"/>
</dbReference>
<dbReference type="GO" id="GO:0016149">
    <property type="term" value="F:translation release factor activity, codon specific"/>
    <property type="evidence" value="ECO:0007669"/>
    <property type="project" value="UniProtKB-UniRule"/>
</dbReference>
<dbReference type="GO" id="GO:0006449">
    <property type="term" value="P:regulation of translational termination"/>
    <property type="evidence" value="ECO:0007669"/>
    <property type="project" value="UniProtKB-UniRule"/>
</dbReference>
<dbReference type="CDD" id="cd04169">
    <property type="entry name" value="RF3"/>
    <property type="match status" value="1"/>
</dbReference>
<dbReference type="FunFam" id="3.30.70.3280:FF:000001">
    <property type="entry name" value="Peptide chain release factor 3"/>
    <property type="match status" value="1"/>
</dbReference>
<dbReference type="FunFam" id="3.40.50.300:FF:000542">
    <property type="entry name" value="Peptide chain release factor 3"/>
    <property type="match status" value="1"/>
</dbReference>
<dbReference type="Gene3D" id="3.40.50.300">
    <property type="entry name" value="P-loop containing nucleotide triphosphate hydrolases"/>
    <property type="match status" value="1"/>
</dbReference>
<dbReference type="Gene3D" id="3.30.70.3280">
    <property type="entry name" value="Peptide chain release factor 3, domain III"/>
    <property type="match status" value="1"/>
</dbReference>
<dbReference type="Gene3D" id="2.40.30.10">
    <property type="entry name" value="Translation factors"/>
    <property type="match status" value="1"/>
</dbReference>
<dbReference type="HAMAP" id="MF_00072">
    <property type="entry name" value="Rel_fac_3"/>
    <property type="match status" value="1"/>
</dbReference>
<dbReference type="InterPro" id="IPR053905">
    <property type="entry name" value="EF-G-like_DII"/>
</dbReference>
<dbReference type="InterPro" id="IPR035647">
    <property type="entry name" value="EFG_III/V"/>
</dbReference>
<dbReference type="InterPro" id="IPR031157">
    <property type="entry name" value="G_TR_CS"/>
</dbReference>
<dbReference type="InterPro" id="IPR027417">
    <property type="entry name" value="P-loop_NTPase"/>
</dbReference>
<dbReference type="InterPro" id="IPR004548">
    <property type="entry name" value="PrfC"/>
</dbReference>
<dbReference type="InterPro" id="IPR032090">
    <property type="entry name" value="RF3_C"/>
</dbReference>
<dbReference type="InterPro" id="IPR038467">
    <property type="entry name" value="RF3_dom_3_sf"/>
</dbReference>
<dbReference type="InterPro" id="IPR041732">
    <property type="entry name" value="RF3_GTP-bd"/>
</dbReference>
<dbReference type="InterPro" id="IPR005225">
    <property type="entry name" value="Small_GTP-bd"/>
</dbReference>
<dbReference type="InterPro" id="IPR000795">
    <property type="entry name" value="T_Tr_GTP-bd_dom"/>
</dbReference>
<dbReference type="InterPro" id="IPR009000">
    <property type="entry name" value="Transl_B-barrel_sf"/>
</dbReference>
<dbReference type="NCBIfam" id="TIGR00503">
    <property type="entry name" value="prfC"/>
    <property type="match status" value="1"/>
</dbReference>
<dbReference type="NCBIfam" id="NF001964">
    <property type="entry name" value="PRK00741.1"/>
    <property type="match status" value="1"/>
</dbReference>
<dbReference type="NCBIfam" id="TIGR00231">
    <property type="entry name" value="small_GTP"/>
    <property type="match status" value="1"/>
</dbReference>
<dbReference type="PANTHER" id="PTHR43556">
    <property type="entry name" value="PEPTIDE CHAIN RELEASE FACTOR RF3"/>
    <property type="match status" value="1"/>
</dbReference>
<dbReference type="PANTHER" id="PTHR43556:SF2">
    <property type="entry name" value="PEPTIDE CHAIN RELEASE FACTOR RF3"/>
    <property type="match status" value="1"/>
</dbReference>
<dbReference type="Pfam" id="PF22042">
    <property type="entry name" value="EF-G_D2"/>
    <property type="match status" value="1"/>
</dbReference>
<dbReference type="Pfam" id="PF00009">
    <property type="entry name" value="GTP_EFTU"/>
    <property type="match status" value="1"/>
</dbReference>
<dbReference type="Pfam" id="PF16658">
    <property type="entry name" value="RF3_C"/>
    <property type="match status" value="1"/>
</dbReference>
<dbReference type="PRINTS" id="PR00315">
    <property type="entry name" value="ELONGATNFCT"/>
</dbReference>
<dbReference type="SUPFAM" id="SSF54980">
    <property type="entry name" value="EF-G C-terminal domain-like"/>
    <property type="match status" value="1"/>
</dbReference>
<dbReference type="SUPFAM" id="SSF52540">
    <property type="entry name" value="P-loop containing nucleoside triphosphate hydrolases"/>
    <property type="match status" value="1"/>
</dbReference>
<dbReference type="SUPFAM" id="SSF50447">
    <property type="entry name" value="Translation proteins"/>
    <property type="match status" value="1"/>
</dbReference>
<dbReference type="PROSITE" id="PS00301">
    <property type="entry name" value="G_TR_1"/>
    <property type="match status" value="1"/>
</dbReference>
<dbReference type="PROSITE" id="PS51722">
    <property type="entry name" value="G_TR_2"/>
    <property type="match status" value="1"/>
</dbReference>
<organism>
    <name type="scientific">Buchnera aphidicola subsp. Schizaphis graminum (strain Sg)</name>
    <dbReference type="NCBI Taxonomy" id="198804"/>
    <lineage>
        <taxon>Bacteria</taxon>
        <taxon>Pseudomonadati</taxon>
        <taxon>Pseudomonadota</taxon>
        <taxon>Gammaproteobacteria</taxon>
        <taxon>Enterobacterales</taxon>
        <taxon>Erwiniaceae</taxon>
        <taxon>Buchnera</taxon>
    </lineage>
</organism>
<keyword id="KW-0963">Cytoplasm</keyword>
<keyword id="KW-0342">GTP-binding</keyword>
<keyword id="KW-0547">Nucleotide-binding</keyword>
<keyword id="KW-0648">Protein biosynthesis</keyword>
<reference key="1">
    <citation type="journal article" date="2002" name="Science">
        <title>50 million years of genomic stasis in endosymbiotic bacteria.</title>
        <authorList>
            <person name="Tamas I."/>
            <person name="Klasson L."/>
            <person name="Canbaeck B."/>
            <person name="Naeslund A.K."/>
            <person name="Eriksson A.-S."/>
            <person name="Wernegreen J.J."/>
            <person name="Sandstroem J.P."/>
            <person name="Moran N.A."/>
            <person name="Andersson S.G.E."/>
        </authorList>
    </citation>
    <scope>NUCLEOTIDE SEQUENCE [LARGE SCALE GENOMIC DNA]</scope>
    <source>
        <strain>Sg</strain>
    </source>
</reference>
<name>RF3_BUCAP</name>